<protein>
    <recommendedName>
        <fullName evidence="1">Adenine phosphoribosyltransferase</fullName>
        <shortName evidence="1">APRT</shortName>
        <ecNumber evidence="1">2.4.2.7</ecNumber>
    </recommendedName>
</protein>
<evidence type="ECO:0000255" key="1">
    <source>
        <dbReference type="HAMAP-Rule" id="MF_00004"/>
    </source>
</evidence>
<reference key="1">
    <citation type="journal article" date="2008" name="J. Biotechnol.">
        <title>The genome of Xanthomonas campestris pv. campestris B100 and its use for the reconstruction of metabolic pathways involved in xanthan biosynthesis.</title>
        <authorList>
            <person name="Vorhoelter F.-J."/>
            <person name="Schneiker S."/>
            <person name="Goesmann A."/>
            <person name="Krause L."/>
            <person name="Bekel T."/>
            <person name="Kaiser O."/>
            <person name="Linke B."/>
            <person name="Patschkowski T."/>
            <person name="Rueckert C."/>
            <person name="Schmid J."/>
            <person name="Sidhu V.K."/>
            <person name="Sieber V."/>
            <person name="Tauch A."/>
            <person name="Watt S.A."/>
            <person name="Weisshaar B."/>
            <person name="Becker A."/>
            <person name="Niehaus K."/>
            <person name="Puehler A."/>
        </authorList>
    </citation>
    <scope>NUCLEOTIDE SEQUENCE [LARGE SCALE GENOMIC DNA]</scope>
    <source>
        <strain>B100</strain>
    </source>
</reference>
<proteinExistence type="inferred from homology"/>
<accession>B0RS13</accession>
<dbReference type="EC" id="2.4.2.7" evidence="1"/>
<dbReference type="EMBL" id="AM920689">
    <property type="protein sequence ID" value="CAP51248.1"/>
    <property type="molecule type" value="Genomic_DNA"/>
</dbReference>
<dbReference type="SMR" id="B0RS13"/>
<dbReference type="KEGG" id="xca:xcc-b100_1895"/>
<dbReference type="HOGENOM" id="CLU_063339_3_0_6"/>
<dbReference type="UniPathway" id="UPA00588">
    <property type="reaction ID" value="UER00646"/>
</dbReference>
<dbReference type="Proteomes" id="UP000001188">
    <property type="component" value="Chromosome"/>
</dbReference>
<dbReference type="GO" id="GO:0005737">
    <property type="term" value="C:cytoplasm"/>
    <property type="evidence" value="ECO:0007669"/>
    <property type="project" value="UniProtKB-SubCell"/>
</dbReference>
<dbReference type="GO" id="GO:0002055">
    <property type="term" value="F:adenine binding"/>
    <property type="evidence" value="ECO:0007669"/>
    <property type="project" value="TreeGrafter"/>
</dbReference>
<dbReference type="GO" id="GO:0003999">
    <property type="term" value="F:adenine phosphoribosyltransferase activity"/>
    <property type="evidence" value="ECO:0007669"/>
    <property type="project" value="UniProtKB-UniRule"/>
</dbReference>
<dbReference type="GO" id="GO:0016208">
    <property type="term" value="F:AMP binding"/>
    <property type="evidence" value="ECO:0007669"/>
    <property type="project" value="TreeGrafter"/>
</dbReference>
<dbReference type="GO" id="GO:0006168">
    <property type="term" value="P:adenine salvage"/>
    <property type="evidence" value="ECO:0007669"/>
    <property type="project" value="InterPro"/>
</dbReference>
<dbReference type="GO" id="GO:0044209">
    <property type="term" value="P:AMP salvage"/>
    <property type="evidence" value="ECO:0007669"/>
    <property type="project" value="UniProtKB-UniRule"/>
</dbReference>
<dbReference type="GO" id="GO:0006166">
    <property type="term" value="P:purine ribonucleoside salvage"/>
    <property type="evidence" value="ECO:0007669"/>
    <property type="project" value="UniProtKB-KW"/>
</dbReference>
<dbReference type="CDD" id="cd06223">
    <property type="entry name" value="PRTases_typeI"/>
    <property type="match status" value="1"/>
</dbReference>
<dbReference type="FunFam" id="3.40.50.2020:FF:000021">
    <property type="entry name" value="Adenine phosphoribosyltransferase"/>
    <property type="match status" value="1"/>
</dbReference>
<dbReference type="Gene3D" id="3.40.50.2020">
    <property type="match status" value="1"/>
</dbReference>
<dbReference type="HAMAP" id="MF_00004">
    <property type="entry name" value="Aden_phosphoribosyltr"/>
    <property type="match status" value="1"/>
</dbReference>
<dbReference type="InterPro" id="IPR005764">
    <property type="entry name" value="Ade_phspho_trans"/>
</dbReference>
<dbReference type="InterPro" id="IPR000836">
    <property type="entry name" value="PRibTrfase_dom"/>
</dbReference>
<dbReference type="InterPro" id="IPR029057">
    <property type="entry name" value="PRTase-like"/>
</dbReference>
<dbReference type="InterPro" id="IPR050054">
    <property type="entry name" value="UPRTase/APRTase"/>
</dbReference>
<dbReference type="NCBIfam" id="TIGR01090">
    <property type="entry name" value="apt"/>
    <property type="match status" value="1"/>
</dbReference>
<dbReference type="NCBIfam" id="NF002634">
    <property type="entry name" value="PRK02304.1-3"/>
    <property type="match status" value="1"/>
</dbReference>
<dbReference type="NCBIfam" id="NF002636">
    <property type="entry name" value="PRK02304.1-5"/>
    <property type="match status" value="1"/>
</dbReference>
<dbReference type="PANTHER" id="PTHR32315">
    <property type="entry name" value="ADENINE PHOSPHORIBOSYLTRANSFERASE"/>
    <property type="match status" value="1"/>
</dbReference>
<dbReference type="PANTHER" id="PTHR32315:SF3">
    <property type="entry name" value="ADENINE PHOSPHORIBOSYLTRANSFERASE"/>
    <property type="match status" value="1"/>
</dbReference>
<dbReference type="Pfam" id="PF00156">
    <property type="entry name" value="Pribosyltran"/>
    <property type="match status" value="1"/>
</dbReference>
<dbReference type="SUPFAM" id="SSF53271">
    <property type="entry name" value="PRTase-like"/>
    <property type="match status" value="1"/>
</dbReference>
<dbReference type="PROSITE" id="PS00103">
    <property type="entry name" value="PUR_PYR_PR_TRANSFER"/>
    <property type="match status" value="1"/>
</dbReference>
<organism>
    <name type="scientific">Xanthomonas campestris pv. campestris (strain B100)</name>
    <dbReference type="NCBI Taxonomy" id="509169"/>
    <lineage>
        <taxon>Bacteria</taxon>
        <taxon>Pseudomonadati</taxon>
        <taxon>Pseudomonadota</taxon>
        <taxon>Gammaproteobacteria</taxon>
        <taxon>Lysobacterales</taxon>
        <taxon>Lysobacteraceae</taxon>
        <taxon>Xanthomonas</taxon>
    </lineage>
</organism>
<gene>
    <name evidence="1" type="primary">apt</name>
    <name type="ordered locus">xcc-b100_1895</name>
</gene>
<name>APT_XANCB</name>
<feature type="chain" id="PRO_0000334721" description="Adenine phosphoribosyltransferase">
    <location>
        <begin position="1"/>
        <end position="186"/>
    </location>
</feature>
<comment type="function">
    <text evidence="1">Catalyzes a salvage reaction resulting in the formation of AMP, that is energically less costly than de novo synthesis.</text>
</comment>
<comment type="catalytic activity">
    <reaction evidence="1">
        <text>AMP + diphosphate = 5-phospho-alpha-D-ribose 1-diphosphate + adenine</text>
        <dbReference type="Rhea" id="RHEA:16609"/>
        <dbReference type="ChEBI" id="CHEBI:16708"/>
        <dbReference type="ChEBI" id="CHEBI:33019"/>
        <dbReference type="ChEBI" id="CHEBI:58017"/>
        <dbReference type="ChEBI" id="CHEBI:456215"/>
        <dbReference type="EC" id="2.4.2.7"/>
    </reaction>
</comment>
<comment type="pathway">
    <text evidence="1">Purine metabolism; AMP biosynthesis via salvage pathway; AMP from adenine: step 1/1.</text>
</comment>
<comment type="subunit">
    <text evidence="1">Homodimer.</text>
</comment>
<comment type="subcellular location">
    <subcellularLocation>
        <location evidence="1">Cytoplasm</location>
    </subcellularLocation>
</comment>
<comment type="similarity">
    <text evidence="1">Belongs to the purine/pyrimidine phosphoribosyltransferase family.</text>
</comment>
<keyword id="KW-0963">Cytoplasm</keyword>
<keyword id="KW-0328">Glycosyltransferase</keyword>
<keyword id="KW-0660">Purine salvage</keyword>
<keyword id="KW-0808">Transferase</keyword>
<sequence>MNDCSRCAGSTSSGPTHWSGRIRDIADFPKPGIVFKDITPLLSDGPDFASALDEMAQPWRTTPLDAVLGIEARGFILGAALARELRTGFVPVRKPGKLPGRTLIQEYALEYGTDRIEMHEDALPRGARVLIVDDVLATGGTLRAALGLAAQLELEIVGAAVLVELLALQGRSKWLNDVPLLATLSY</sequence>